<accession>Q55GI8</accession>
<reference key="1">
    <citation type="journal article" date="2005" name="Nature">
        <title>The genome of the social amoeba Dictyostelium discoideum.</title>
        <authorList>
            <person name="Eichinger L."/>
            <person name="Pachebat J.A."/>
            <person name="Gloeckner G."/>
            <person name="Rajandream M.A."/>
            <person name="Sucgang R."/>
            <person name="Berriman M."/>
            <person name="Song J."/>
            <person name="Olsen R."/>
            <person name="Szafranski K."/>
            <person name="Xu Q."/>
            <person name="Tunggal B."/>
            <person name="Kummerfeld S."/>
            <person name="Madera M."/>
            <person name="Konfortov B.A."/>
            <person name="Rivero F."/>
            <person name="Bankier A.T."/>
            <person name="Lehmann R."/>
            <person name="Hamlin N."/>
            <person name="Davies R."/>
            <person name="Gaudet P."/>
            <person name="Fey P."/>
            <person name="Pilcher K."/>
            <person name="Chen G."/>
            <person name="Saunders D."/>
            <person name="Sodergren E.J."/>
            <person name="Davis P."/>
            <person name="Kerhornou A."/>
            <person name="Nie X."/>
            <person name="Hall N."/>
            <person name="Anjard C."/>
            <person name="Hemphill L."/>
            <person name="Bason N."/>
            <person name="Farbrother P."/>
            <person name="Desany B."/>
            <person name="Just E."/>
            <person name="Morio T."/>
            <person name="Rost R."/>
            <person name="Churcher C.M."/>
            <person name="Cooper J."/>
            <person name="Haydock S."/>
            <person name="van Driessche N."/>
            <person name="Cronin A."/>
            <person name="Goodhead I."/>
            <person name="Muzny D.M."/>
            <person name="Mourier T."/>
            <person name="Pain A."/>
            <person name="Lu M."/>
            <person name="Harper D."/>
            <person name="Lindsay R."/>
            <person name="Hauser H."/>
            <person name="James K.D."/>
            <person name="Quiles M."/>
            <person name="Madan Babu M."/>
            <person name="Saito T."/>
            <person name="Buchrieser C."/>
            <person name="Wardroper A."/>
            <person name="Felder M."/>
            <person name="Thangavelu M."/>
            <person name="Johnson D."/>
            <person name="Knights A."/>
            <person name="Loulseged H."/>
            <person name="Mungall K.L."/>
            <person name="Oliver K."/>
            <person name="Price C."/>
            <person name="Quail M.A."/>
            <person name="Urushihara H."/>
            <person name="Hernandez J."/>
            <person name="Rabbinowitsch E."/>
            <person name="Steffen D."/>
            <person name="Sanders M."/>
            <person name="Ma J."/>
            <person name="Kohara Y."/>
            <person name="Sharp S."/>
            <person name="Simmonds M.N."/>
            <person name="Spiegler S."/>
            <person name="Tivey A."/>
            <person name="Sugano S."/>
            <person name="White B."/>
            <person name="Walker D."/>
            <person name="Woodward J.R."/>
            <person name="Winckler T."/>
            <person name="Tanaka Y."/>
            <person name="Shaulsky G."/>
            <person name="Schleicher M."/>
            <person name="Weinstock G.M."/>
            <person name="Rosenthal A."/>
            <person name="Cox E.C."/>
            <person name="Chisholm R.L."/>
            <person name="Gibbs R.A."/>
            <person name="Loomis W.F."/>
            <person name="Platzer M."/>
            <person name="Kay R.R."/>
            <person name="Williams J.G."/>
            <person name="Dear P.H."/>
            <person name="Noegel A.A."/>
            <person name="Barrell B.G."/>
            <person name="Kuspa A."/>
        </authorList>
    </citation>
    <scope>NUCLEOTIDE SEQUENCE [LARGE SCALE GENOMIC DNA]</scope>
    <source>
        <strain>AX4</strain>
    </source>
</reference>
<keyword id="KW-0325">Glycoprotein</keyword>
<keyword id="KW-0472">Membrane</keyword>
<keyword id="KW-1185">Reference proteome</keyword>
<keyword id="KW-0677">Repeat</keyword>
<keyword id="KW-0732">Signal</keyword>
<keyword id="KW-0812">Transmembrane</keyword>
<keyword id="KW-1133">Transmembrane helix</keyword>
<name>TGRO1_DICDI</name>
<evidence type="ECO:0000255" key="1"/>
<evidence type="ECO:0000256" key="2">
    <source>
        <dbReference type="SAM" id="MobiDB-lite"/>
    </source>
</evidence>
<comment type="subcellular location">
    <subcellularLocation>
        <location>Membrane</location>
        <topology>Single-pass type I membrane protein</topology>
    </subcellularLocation>
</comment>
<protein>
    <recommendedName>
        <fullName>Tiger protein O1</fullName>
    </recommendedName>
    <alternativeName>
        <fullName>Transmembrane, IPT, Ig, E-set, Repeat protein O1</fullName>
    </alternativeName>
</protein>
<feature type="signal peptide" evidence="1">
    <location>
        <begin position="1"/>
        <end position="21"/>
    </location>
</feature>
<feature type="chain" id="PRO_0000384054" description="Tiger protein O1">
    <location>
        <begin position="22"/>
        <end position="887"/>
    </location>
</feature>
<feature type="topological domain" description="Extracellular" evidence="1">
    <location>
        <begin position="22"/>
        <end position="845"/>
    </location>
</feature>
<feature type="transmembrane region" description="Helical" evidence="1">
    <location>
        <begin position="846"/>
        <end position="866"/>
    </location>
</feature>
<feature type="topological domain" description="Cytoplasmic" evidence="1">
    <location>
        <begin position="867"/>
        <end position="887"/>
    </location>
</feature>
<feature type="domain" description="IPT/TIG 1">
    <location>
        <begin position="277"/>
        <end position="365"/>
    </location>
</feature>
<feature type="domain" description="IPT/TIG 2">
    <location>
        <begin position="710"/>
        <end position="767"/>
    </location>
</feature>
<feature type="region of interest" description="Disordered" evidence="2">
    <location>
        <begin position="811"/>
        <end position="835"/>
    </location>
</feature>
<feature type="glycosylation site" description="N-linked (GlcNAc...) asparagine" evidence="1">
    <location>
        <position position="32"/>
    </location>
</feature>
<feature type="glycosylation site" description="N-linked (GlcNAc...) asparagine" evidence="1">
    <location>
        <position position="70"/>
    </location>
</feature>
<feature type="glycosylation site" description="N-linked (GlcNAc...) asparagine" evidence="1">
    <location>
        <position position="186"/>
    </location>
</feature>
<feature type="glycosylation site" description="N-linked (GlcNAc...) asparagine" evidence="1">
    <location>
        <position position="207"/>
    </location>
</feature>
<feature type="glycosylation site" description="N-linked (GlcNAc...) asparagine" evidence="1">
    <location>
        <position position="219"/>
    </location>
</feature>
<feature type="glycosylation site" description="N-linked (GlcNAc...) asparagine" evidence="1">
    <location>
        <position position="259"/>
    </location>
</feature>
<feature type="glycosylation site" description="N-linked (GlcNAc...) asparagine" evidence="1">
    <location>
        <position position="297"/>
    </location>
</feature>
<feature type="glycosylation site" description="N-linked (GlcNAc...) asparagine" evidence="1">
    <location>
        <position position="314"/>
    </location>
</feature>
<feature type="glycosylation site" description="N-linked (GlcNAc...) asparagine" evidence="1">
    <location>
        <position position="325"/>
    </location>
</feature>
<feature type="glycosylation site" description="N-linked (GlcNAc...) asparagine" evidence="1">
    <location>
        <position position="338"/>
    </location>
</feature>
<feature type="glycosylation site" description="N-linked (GlcNAc...) asparagine" evidence="1">
    <location>
        <position position="354"/>
    </location>
</feature>
<feature type="glycosylation site" description="N-linked (GlcNAc...) asparagine" evidence="1">
    <location>
        <position position="393"/>
    </location>
</feature>
<feature type="glycosylation site" description="N-linked (GlcNAc...) asparagine" evidence="1">
    <location>
        <position position="431"/>
    </location>
</feature>
<feature type="glycosylation site" description="N-linked (GlcNAc...) asparagine" evidence="1">
    <location>
        <position position="588"/>
    </location>
</feature>
<feature type="glycosylation site" description="N-linked (GlcNAc...) asparagine" evidence="1">
    <location>
        <position position="629"/>
    </location>
</feature>
<feature type="glycosylation site" description="N-linked (GlcNAc...) asparagine" evidence="1">
    <location>
        <position position="652"/>
    </location>
</feature>
<feature type="glycosylation site" description="N-linked (GlcNAc...) asparagine" evidence="1">
    <location>
        <position position="687"/>
    </location>
</feature>
<feature type="glycosylation site" description="N-linked (GlcNAc...) asparagine" evidence="1">
    <location>
        <position position="710"/>
    </location>
</feature>
<feature type="glycosylation site" description="N-linked (GlcNAc...) asparagine" evidence="1">
    <location>
        <position position="720"/>
    </location>
</feature>
<feature type="glycosylation site" description="N-linked (GlcNAc...) asparagine" evidence="1">
    <location>
        <position position="730"/>
    </location>
</feature>
<feature type="glycosylation site" description="N-linked (GlcNAc...) asparagine" evidence="1">
    <location>
        <position position="775"/>
    </location>
</feature>
<feature type="glycosylation site" description="N-linked (GlcNAc...) asparagine" evidence="1">
    <location>
        <position position="788"/>
    </location>
</feature>
<feature type="glycosylation site" description="N-linked (GlcNAc...) asparagine" evidence="1">
    <location>
        <position position="811"/>
    </location>
</feature>
<feature type="glycosylation site" description="N-linked (GlcNAc...) asparagine" evidence="1">
    <location>
        <position position="816"/>
    </location>
</feature>
<dbReference type="EMBL" id="AAFI02000003">
    <property type="protein sequence ID" value="EAL73698.2"/>
    <property type="molecule type" value="Genomic_DNA"/>
</dbReference>
<dbReference type="RefSeq" id="XP_647196.2">
    <property type="nucleotide sequence ID" value="XM_642104.2"/>
</dbReference>
<dbReference type="FunCoup" id="Q55GI8">
    <property type="interactions" value="2"/>
</dbReference>
<dbReference type="GlyCosmos" id="Q55GI8">
    <property type="glycosylation" value="24 sites, No reported glycans"/>
</dbReference>
<dbReference type="GlyGen" id="Q55GI8">
    <property type="glycosylation" value="24 sites"/>
</dbReference>
<dbReference type="PaxDb" id="44689-DDB0304789"/>
<dbReference type="EnsemblProtists" id="EAL73698">
    <property type="protein sequence ID" value="EAL73698"/>
    <property type="gene ID" value="DDB_G0268490"/>
</dbReference>
<dbReference type="GeneID" id="8616000"/>
<dbReference type="KEGG" id="ddi:DDB_G0268490"/>
<dbReference type="dictyBase" id="DDB_G0268490">
    <property type="gene designation" value="tgrO1"/>
</dbReference>
<dbReference type="VEuPathDB" id="AmoebaDB:DDB_G0268490"/>
<dbReference type="eggNOG" id="ENOG502SXB7">
    <property type="taxonomic scope" value="Eukaryota"/>
</dbReference>
<dbReference type="HOGENOM" id="CLU_009950_0_0_1"/>
<dbReference type="InParanoid" id="Q55GI8"/>
<dbReference type="PhylomeDB" id="Q55GI8"/>
<dbReference type="PRO" id="PR:Q55GI8"/>
<dbReference type="Proteomes" id="UP000002195">
    <property type="component" value="Chromosome 1"/>
</dbReference>
<dbReference type="GO" id="GO:0009897">
    <property type="term" value="C:external side of plasma membrane"/>
    <property type="evidence" value="ECO:0000318"/>
    <property type="project" value="GO_Central"/>
</dbReference>
<dbReference type="GO" id="GO:0031152">
    <property type="term" value="P:aggregation involved in sorocarp development"/>
    <property type="evidence" value="ECO:0000318"/>
    <property type="project" value="GO_Central"/>
</dbReference>
<dbReference type="GO" id="GO:0098742">
    <property type="term" value="P:cell-cell adhesion via plasma-membrane adhesion molecules"/>
    <property type="evidence" value="ECO:0000318"/>
    <property type="project" value="GO_Central"/>
</dbReference>
<dbReference type="CDD" id="cd00102">
    <property type="entry name" value="IPT"/>
    <property type="match status" value="1"/>
</dbReference>
<dbReference type="InterPro" id="IPR052014">
    <property type="entry name" value="Dictyostelium_Tiger"/>
</dbReference>
<dbReference type="InterPro" id="IPR014756">
    <property type="entry name" value="Ig_E-set"/>
</dbReference>
<dbReference type="PANTHER" id="PTHR31341">
    <property type="entry name" value="IPT/TIG DOMAIN-CONTAINING PROTEIN-RELATED-RELATED"/>
    <property type="match status" value="1"/>
</dbReference>
<dbReference type="PANTHER" id="PTHR31341:SF4">
    <property type="entry name" value="IPT_TIG DOMAIN-CONTAINING PROTEIN-RELATED"/>
    <property type="match status" value="1"/>
</dbReference>
<dbReference type="Pfam" id="PF24612">
    <property type="entry name" value="Ig_TgrO1"/>
    <property type="match status" value="2"/>
</dbReference>
<dbReference type="SUPFAM" id="SSF81296">
    <property type="entry name" value="E set domains"/>
    <property type="match status" value="1"/>
</dbReference>
<organism>
    <name type="scientific">Dictyostelium discoideum</name>
    <name type="common">Social amoeba</name>
    <dbReference type="NCBI Taxonomy" id="44689"/>
    <lineage>
        <taxon>Eukaryota</taxon>
        <taxon>Amoebozoa</taxon>
        <taxon>Evosea</taxon>
        <taxon>Eumycetozoa</taxon>
        <taxon>Dictyostelia</taxon>
        <taxon>Dictyosteliales</taxon>
        <taxon>Dictyosteliaceae</taxon>
        <taxon>Dictyostelium</taxon>
    </lineage>
</organism>
<proteinExistence type="inferred from homology"/>
<sequence length="887" mass="99445">MEKKLLIIVIVFLFSTIQVFCRIDDKTFVISNETYLSYHFPVDSEYFSSLNFEHYEGPSFQLDFECITFNGTICFSQIYPEIKKKIYGTSISYSTQKTYKLDQELFPTPIVSSPFQPPTKGGISILKGTFLTFSEKTFYQVIYPKKQKIFILDSESLSFDATNFKVNCPPGCGYQIIKWDNGNLFNFSYSNPSISVVKINPSNIIVNGSDFCDSSYSSNITIDGVIIPNSNYEKDEDSIVIIYTQQHTIKSLMKIETSNVTSVEIEIVFKPEPLLINSVPYSKGGLLILEGLRLSSNTTNKNNNNNNIIIKIGNITCSNAISISNDSITCNLNPGFNNKSVTLNNLPVSVTINNITNENKLLFNYGIVKLNPNKYSLPDRVLQLNGDCLGNSNGTIVYLNGKETLLNDLKINNQETTLSFKIPDEFKSKLNVSIKVNDILSNEIQIDISFYASHSNEQPSTNGNTNIIFTLYNIKSENYNKIPSIIIIPEQIVINGVSVNSPTNQDVHSYSFLIPAGCGKKDIQIIIGSQSCLSSITYFEPIIKNCLVSGFDGTNGNIICDGSFGNKDYLIKSSVLFSNDEIIPPSINSTTFSFPLISGYHSDDLIFQMCGVQSKPFKLNISPSLKGINQSQMETLGGKFYILGEFFSANINCSVFCNDKEYEKKFENSKTISFDLQIPGPNDITCNYTFDNGKNTGDFKIEYPLPLIENTSSINVNGGNLTIYGKNFYNVSNIKVEVDNQLKCNKIEFINLNSLTCFLPPFIETLFNDQKLLLNSSTTIFSKKLLLNVTFESKTWSGYIFQYSKEEIKNNDTSENSTNDILNHEKNNNNQKDGSSLSKKSIILLSILLPSFIILIVSLAIVILVIKRNKTKHSKNMSSKEKELMKQ</sequence>
<gene>
    <name type="primary">tgrO1</name>
    <name type="ORF">DDB_G0268490</name>
</gene>